<keyword id="KW-0067">ATP-binding</keyword>
<keyword id="KW-0143">Chaperone</keyword>
<keyword id="KW-0479">Metal-binding</keyword>
<keyword id="KW-0547">Nucleotide-binding</keyword>
<keyword id="KW-1185">Reference proteome</keyword>
<keyword id="KW-0862">Zinc</keyword>
<proteinExistence type="inferred from homology"/>
<comment type="function">
    <text evidence="1">ATP-dependent specificity component of the Clp protease. It directs the protease to specific substrates. Can perform chaperone functions in the absence of ClpP.</text>
</comment>
<comment type="subunit">
    <text evidence="1">Component of the ClpX-ClpP complex. Forms a hexameric ring that, in the presence of ATP, binds to fourteen ClpP subunits assembled into a disk-like structure with a central cavity, resembling the structure of eukaryotic proteasomes.</text>
</comment>
<comment type="similarity">
    <text evidence="1">Belongs to the ClpX chaperone family.</text>
</comment>
<reference key="1">
    <citation type="journal article" date="2012" name="Stand. Genomic Sci.">
        <title>Complete genome sequence of Polynucleobacter necessarius subsp. asymbioticus type strain (QLW-P1DMWA-1(T)).</title>
        <authorList>
            <person name="Meincke L."/>
            <person name="Copeland A."/>
            <person name="Lapidus A."/>
            <person name="Lucas S."/>
            <person name="Berry K.W."/>
            <person name="Del Rio T.G."/>
            <person name="Hammon N."/>
            <person name="Dalin E."/>
            <person name="Tice H."/>
            <person name="Pitluck S."/>
            <person name="Richardson P."/>
            <person name="Bruce D."/>
            <person name="Goodwin L."/>
            <person name="Han C."/>
            <person name="Tapia R."/>
            <person name="Detter J.C."/>
            <person name="Schmutz J."/>
            <person name="Brettin T."/>
            <person name="Larimer F."/>
            <person name="Land M."/>
            <person name="Hauser L."/>
            <person name="Kyrpides N.C."/>
            <person name="Ivanova N."/>
            <person name="Goker M."/>
            <person name="Woyke T."/>
            <person name="Wu Q.L."/>
            <person name="Pockl M."/>
            <person name="Hahn M.W."/>
            <person name="Klenk H.P."/>
        </authorList>
    </citation>
    <scope>NUCLEOTIDE SEQUENCE [LARGE SCALE GENOMIC DNA]</scope>
    <source>
        <strain>DSM 18221 / CIP 109841 / QLW-P1DMWA-1</strain>
    </source>
</reference>
<gene>
    <name evidence="1" type="primary">clpX</name>
    <name type="ordered locus">Pnuc_0935</name>
</gene>
<sequence>MSDTTGTNSSEKVLYCSFCGKSQHEVKKLIAGPSVFICDECIDLCTDIIQEEIAKLPKEEGDESLPTPHEIRGNLDQYVIGQEHAKKTLAVAVYNHYKRLQYLPKPKKEKLDKDGKPVEASDKKESKLPAKAIVDGVELAKSNILLIGPTGSGKTLLAQTLARMLDVPFVMADATTLTEAGYVGEDVENIIQKLLQACDYNVEKAQRGIVYIDEIDKISRKSDNPSITRDVSGEGVQQALLKLVEGTMASVPPQGGRKHPNQDFLQVDTTNILFICGGAFDGLEKVIQQRTAKTGIGFNATVPGKDERGVSDLLIEVEPEDLIKFGLIPELIGRLPVVATLAQLDEEALIQILTEPKNALVKQYQALLTMEGSELEVRREALSAIAKKAIARKTGARGLRSILEGSLMDVMYDLPSLKNVQKVVIDESSIAEGGKPLLVYKQDLDQPDMSKKA</sequence>
<feature type="chain" id="PRO_1000118375" description="ATP-dependent Clp protease ATP-binding subunit ClpX">
    <location>
        <begin position="1"/>
        <end position="453"/>
    </location>
</feature>
<feature type="domain" description="ClpX-type ZB" evidence="2">
    <location>
        <begin position="4"/>
        <end position="57"/>
    </location>
</feature>
<feature type="binding site" evidence="2">
    <location>
        <position position="16"/>
    </location>
    <ligand>
        <name>Zn(2+)</name>
        <dbReference type="ChEBI" id="CHEBI:29105"/>
    </ligand>
</feature>
<feature type="binding site" evidence="2">
    <location>
        <position position="19"/>
    </location>
    <ligand>
        <name>Zn(2+)</name>
        <dbReference type="ChEBI" id="CHEBI:29105"/>
    </ligand>
</feature>
<feature type="binding site" evidence="2">
    <location>
        <position position="38"/>
    </location>
    <ligand>
        <name>Zn(2+)</name>
        <dbReference type="ChEBI" id="CHEBI:29105"/>
    </ligand>
</feature>
<feature type="binding site" evidence="2">
    <location>
        <position position="41"/>
    </location>
    <ligand>
        <name>Zn(2+)</name>
        <dbReference type="ChEBI" id="CHEBI:29105"/>
    </ligand>
</feature>
<feature type="binding site" evidence="1">
    <location>
        <begin position="149"/>
        <end position="156"/>
    </location>
    <ligand>
        <name>ATP</name>
        <dbReference type="ChEBI" id="CHEBI:30616"/>
    </ligand>
</feature>
<dbReference type="EMBL" id="CP000655">
    <property type="protein sequence ID" value="ABP34151.1"/>
    <property type="molecule type" value="Genomic_DNA"/>
</dbReference>
<dbReference type="RefSeq" id="WP_011902776.1">
    <property type="nucleotide sequence ID" value="NC_009379.1"/>
</dbReference>
<dbReference type="SMR" id="A4SXD7"/>
<dbReference type="GeneID" id="31481302"/>
<dbReference type="KEGG" id="pnu:Pnuc_0935"/>
<dbReference type="eggNOG" id="COG1219">
    <property type="taxonomic scope" value="Bacteria"/>
</dbReference>
<dbReference type="HOGENOM" id="CLU_014218_8_2_4"/>
<dbReference type="Proteomes" id="UP000000231">
    <property type="component" value="Chromosome"/>
</dbReference>
<dbReference type="GO" id="GO:0009376">
    <property type="term" value="C:HslUV protease complex"/>
    <property type="evidence" value="ECO:0007669"/>
    <property type="project" value="TreeGrafter"/>
</dbReference>
<dbReference type="GO" id="GO:0005524">
    <property type="term" value="F:ATP binding"/>
    <property type="evidence" value="ECO:0007669"/>
    <property type="project" value="UniProtKB-UniRule"/>
</dbReference>
<dbReference type="GO" id="GO:0016887">
    <property type="term" value="F:ATP hydrolysis activity"/>
    <property type="evidence" value="ECO:0007669"/>
    <property type="project" value="InterPro"/>
</dbReference>
<dbReference type="GO" id="GO:0140662">
    <property type="term" value="F:ATP-dependent protein folding chaperone"/>
    <property type="evidence" value="ECO:0007669"/>
    <property type="project" value="InterPro"/>
</dbReference>
<dbReference type="GO" id="GO:0046983">
    <property type="term" value="F:protein dimerization activity"/>
    <property type="evidence" value="ECO:0007669"/>
    <property type="project" value="InterPro"/>
</dbReference>
<dbReference type="GO" id="GO:0051082">
    <property type="term" value="F:unfolded protein binding"/>
    <property type="evidence" value="ECO:0007669"/>
    <property type="project" value="UniProtKB-UniRule"/>
</dbReference>
<dbReference type="GO" id="GO:0008270">
    <property type="term" value="F:zinc ion binding"/>
    <property type="evidence" value="ECO:0007669"/>
    <property type="project" value="InterPro"/>
</dbReference>
<dbReference type="GO" id="GO:0051301">
    <property type="term" value="P:cell division"/>
    <property type="evidence" value="ECO:0007669"/>
    <property type="project" value="TreeGrafter"/>
</dbReference>
<dbReference type="GO" id="GO:0051603">
    <property type="term" value="P:proteolysis involved in protein catabolic process"/>
    <property type="evidence" value="ECO:0007669"/>
    <property type="project" value="TreeGrafter"/>
</dbReference>
<dbReference type="CDD" id="cd19497">
    <property type="entry name" value="RecA-like_ClpX"/>
    <property type="match status" value="1"/>
</dbReference>
<dbReference type="FunFam" id="1.10.8.60:FF:000002">
    <property type="entry name" value="ATP-dependent Clp protease ATP-binding subunit ClpX"/>
    <property type="match status" value="1"/>
</dbReference>
<dbReference type="FunFam" id="3.40.50.300:FF:000005">
    <property type="entry name" value="ATP-dependent Clp protease ATP-binding subunit ClpX"/>
    <property type="match status" value="1"/>
</dbReference>
<dbReference type="Gene3D" id="1.10.8.60">
    <property type="match status" value="1"/>
</dbReference>
<dbReference type="Gene3D" id="6.20.220.10">
    <property type="entry name" value="ClpX chaperone, C4-type zinc finger domain"/>
    <property type="match status" value="1"/>
</dbReference>
<dbReference type="Gene3D" id="3.40.50.300">
    <property type="entry name" value="P-loop containing nucleotide triphosphate hydrolases"/>
    <property type="match status" value="1"/>
</dbReference>
<dbReference type="HAMAP" id="MF_00175">
    <property type="entry name" value="ClpX"/>
    <property type="match status" value="1"/>
</dbReference>
<dbReference type="InterPro" id="IPR003593">
    <property type="entry name" value="AAA+_ATPase"/>
</dbReference>
<dbReference type="InterPro" id="IPR050052">
    <property type="entry name" value="ATP-dep_Clp_protease_ClpX"/>
</dbReference>
<dbReference type="InterPro" id="IPR003959">
    <property type="entry name" value="ATPase_AAA_core"/>
</dbReference>
<dbReference type="InterPro" id="IPR019489">
    <property type="entry name" value="Clp_ATPase_C"/>
</dbReference>
<dbReference type="InterPro" id="IPR004487">
    <property type="entry name" value="Clp_protease_ATP-bd_su_ClpX"/>
</dbReference>
<dbReference type="InterPro" id="IPR046425">
    <property type="entry name" value="ClpX_bact"/>
</dbReference>
<dbReference type="InterPro" id="IPR027417">
    <property type="entry name" value="P-loop_NTPase"/>
</dbReference>
<dbReference type="InterPro" id="IPR010603">
    <property type="entry name" value="Znf_CppX_C4"/>
</dbReference>
<dbReference type="InterPro" id="IPR038366">
    <property type="entry name" value="Znf_CppX_C4_sf"/>
</dbReference>
<dbReference type="NCBIfam" id="TIGR00382">
    <property type="entry name" value="clpX"/>
    <property type="match status" value="1"/>
</dbReference>
<dbReference type="NCBIfam" id="NF003745">
    <property type="entry name" value="PRK05342.1"/>
    <property type="match status" value="1"/>
</dbReference>
<dbReference type="PANTHER" id="PTHR48102:SF7">
    <property type="entry name" value="ATP-DEPENDENT CLP PROTEASE ATP-BINDING SUBUNIT CLPX-LIKE, MITOCHONDRIAL"/>
    <property type="match status" value="1"/>
</dbReference>
<dbReference type="PANTHER" id="PTHR48102">
    <property type="entry name" value="ATP-DEPENDENT CLP PROTEASE ATP-BINDING SUBUNIT CLPX-LIKE, MITOCHONDRIAL-RELATED"/>
    <property type="match status" value="1"/>
</dbReference>
<dbReference type="Pfam" id="PF07724">
    <property type="entry name" value="AAA_2"/>
    <property type="match status" value="1"/>
</dbReference>
<dbReference type="Pfam" id="PF10431">
    <property type="entry name" value="ClpB_D2-small"/>
    <property type="match status" value="1"/>
</dbReference>
<dbReference type="Pfam" id="PF06689">
    <property type="entry name" value="zf-C4_ClpX"/>
    <property type="match status" value="1"/>
</dbReference>
<dbReference type="SMART" id="SM00382">
    <property type="entry name" value="AAA"/>
    <property type="match status" value="1"/>
</dbReference>
<dbReference type="SMART" id="SM01086">
    <property type="entry name" value="ClpB_D2-small"/>
    <property type="match status" value="1"/>
</dbReference>
<dbReference type="SMART" id="SM00994">
    <property type="entry name" value="zf-C4_ClpX"/>
    <property type="match status" value="1"/>
</dbReference>
<dbReference type="SUPFAM" id="SSF57716">
    <property type="entry name" value="Glucocorticoid receptor-like (DNA-binding domain)"/>
    <property type="match status" value="1"/>
</dbReference>
<dbReference type="SUPFAM" id="SSF52540">
    <property type="entry name" value="P-loop containing nucleoside triphosphate hydrolases"/>
    <property type="match status" value="1"/>
</dbReference>
<dbReference type="PROSITE" id="PS51902">
    <property type="entry name" value="CLPX_ZB"/>
    <property type="match status" value="1"/>
</dbReference>
<evidence type="ECO:0000255" key="1">
    <source>
        <dbReference type="HAMAP-Rule" id="MF_00175"/>
    </source>
</evidence>
<evidence type="ECO:0000255" key="2">
    <source>
        <dbReference type="PROSITE-ProRule" id="PRU01250"/>
    </source>
</evidence>
<organism>
    <name type="scientific">Polynucleobacter asymbioticus (strain DSM 18221 / CIP 109841 / QLW-P1DMWA-1)</name>
    <name type="common">Polynucleobacter necessarius subsp. asymbioticus</name>
    <dbReference type="NCBI Taxonomy" id="312153"/>
    <lineage>
        <taxon>Bacteria</taxon>
        <taxon>Pseudomonadati</taxon>
        <taxon>Pseudomonadota</taxon>
        <taxon>Betaproteobacteria</taxon>
        <taxon>Burkholderiales</taxon>
        <taxon>Burkholderiaceae</taxon>
        <taxon>Polynucleobacter</taxon>
    </lineage>
</organism>
<protein>
    <recommendedName>
        <fullName evidence="1">ATP-dependent Clp protease ATP-binding subunit ClpX</fullName>
    </recommendedName>
</protein>
<name>CLPX_POLAQ</name>
<accession>A4SXD7</accession>